<protein>
    <recommendedName>
        <fullName>Thioredoxin</fullName>
        <shortName>Trx</shortName>
    </recommendedName>
</protein>
<name>THIO_PORPU</name>
<gene>
    <name type="primary">trxA</name>
</gene>
<organism>
    <name type="scientific">Porphyra purpurea</name>
    <name type="common">Red seaweed</name>
    <name type="synonym">Ulva purpurea</name>
    <dbReference type="NCBI Taxonomy" id="2787"/>
    <lineage>
        <taxon>Eukaryota</taxon>
        <taxon>Rhodophyta</taxon>
        <taxon>Bangiophyceae</taxon>
        <taxon>Bangiales</taxon>
        <taxon>Bangiaceae</taxon>
        <taxon>Porphyra</taxon>
    </lineage>
</organism>
<comment type="function">
    <text>Participates in various redox reactions through the reversible oxidation of its active center dithiol to a disulfide and catalyzes dithiol-disulfide exchange reactions.</text>
</comment>
<comment type="subcellular location">
    <subcellularLocation>
        <location>Plastid</location>
        <location>Chloroplast</location>
    </subcellularLocation>
</comment>
<comment type="similarity">
    <text evidence="3">Belongs to the thioredoxin family.</text>
</comment>
<feature type="chain" id="PRO_0000120070" description="Thioredoxin">
    <location>
        <begin position="1"/>
        <end position="107"/>
    </location>
</feature>
<feature type="domain" description="Thioredoxin" evidence="2">
    <location>
        <begin position="2"/>
        <end position="107"/>
    </location>
</feature>
<feature type="active site" description="Nucleophile" evidence="1">
    <location>
        <position position="31"/>
    </location>
</feature>
<feature type="active site" description="Nucleophile" evidence="1">
    <location>
        <position position="34"/>
    </location>
</feature>
<feature type="site" description="Deprotonates C-terminal active site Cys" evidence="1">
    <location>
        <position position="25"/>
    </location>
</feature>
<feature type="site" description="Contributes to redox potential value" evidence="1">
    <location>
        <position position="32"/>
    </location>
</feature>
<feature type="site" description="Contributes to redox potential value" evidence="1">
    <location>
        <position position="33"/>
    </location>
</feature>
<feature type="disulfide bond" description="Redox-active" evidence="2">
    <location>
        <begin position="31"/>
        <end position="34"/>
    </location>
</feature>
<sequence>MSVSQVTDASFKQEVINNDLPVLVDFWAPWCGPCRMVSPVVDAIAEEYESSIKVVKINTDDNPTIAAEYGIRSIPTLMIFKSGERVDTVIGAVPKSTLESTLNKYIS</sequence>
<accession>P51225</accession>
<evidence type="ECO:0000250" key="1"/>
<evidence type="ECO:0000255" key="2">
    <source>
        <dbReference type="PROSITE-ProRule" id="PRU00691"/>
    </source>
</evidence>
<evidence type="ECO:0000305" key="3"/>
<reference key="1">
    <citation type="journal article" date="1995" name="Plant Mol. Biol. Rep.">
        <title>Complete nucleotide sequence of the Porphyra purpurea chloroplast genome.</title>
        <authorList>
            <person name="Reith M.E."/>
            <person name="Munholland J."/>
        </authorList>
    </citation>
    <scope>NUCLEOTIDE SEQUENCE [LARGE SCALE GENOMIC DNA]</scope>
    <source>
        <strain>Avonport</strain>
    </source>
</reference>
<keyword id="KW-0150">Chloroplast</keyword>
<keyword id="KW-1015">Disulfide bond</keyword>
<keyword id="KW-0249">Electron transport</keyword>
<keyword id="KW-0934">Plastid</keyword>
<keyword id="KW-0676">Redox-active center</keyword>
<keyword id="KW-0813">Transport</keyword>
<dbReference type="EMBL" id="U38804">
    <property type="protein sequence ID" value="AAC08111.1"/>
    <property type="molecule type" value="Genomic_DNA"/>
</dbReference>
<dbReference type="PIR" id="S73146">
    <property type="entry name" value="S73146"/>
</dbReference>
<dbReference type="RefSeq" id="NP_053835.1">
    <property type="nucleotide sequence ID" value="NC_000925.1"/>
</dbReference>
<dbReference type="SMR" id="P51225"/>
<dbReference type="GeneID" id="809852"/>
<dbReference type="GO" id="GO:0009507">
    <property type="term" value="C:chloroplast"/>
    <property type="evidence" value="ECO:0007669"/>
    <property type="project" value="UniProtKB-SubCell"/>
</dbReference>
<dbReference type="GO" id="GO:0015035">
    <property type="term" value="F:protein-disulfide reductase activity"/>
    <property type="evidence" value="ECO:0007669"/>
    <property type="project" value="InterPro"/>
</dbReference>
<dbReference type="CDD" id="cd02947">
    <property type="entry name" value="TRX_family"/>
    <property type="match status" value="1"/>
</dbReference>
<dbReference type="FunFam" id="3.40.30.10:FF:000001">
    <property type="entry name" value="Thioredoxin"/>
    <property type="match status" value="1"/>
</dbReference>
<dbReference type="Gene3D" id="3.40.30.10">
    <property type="entry name" value="Glutaredoxin"/>
    <property type="match status" value="1"/>
</dbReference>
<dbReference type="InterPro" id="IPR005746">
    <property type="entry name" value="Thioredoxin"/>
</dbReference>
<dbReference type="InterPro" id="IPR036249">
    <property type="entry name" value="Thioredoxin-like_sf"/>
</dbReference>
<dbReference type="InterPro" id="IPR017937">
    <property type="entry name" value="Thioredoxin_CS"/>
</dbReference>
<dbReference type="InterPro" id="IPR013766">
    <property type="entry name" value="Thioredoxin_domain"/>
</dbReference>
<dbReference type="NCBIfam" id="TIGR01068">
    <property type="entry name" value="thioredoxin"/>
    <property type="match status" value="1"/>
</dbReference>
<dbReference type="PANTHER" id="PTHR45663">
    <property type="entry name" value="GEO12009P1"/>
    <property type="match status" value="1"/>
</dbReference>
<dbReference type="PANTHER" id="PTHR45663:SF11">
    <property type="entry name" value="GEO12009P1"/>
    <property type="match status" value="1"/>
</dbReference>
<dbReference type="Pfam" id="PF00085">
    <property type="entry name" value="Thioredoxin"/>
    <property type="match status" value="1"/>
</dbReference>
<dbReference type="PIRSF" id="PIRSF000077">
    <property type="entry name" value="Thioredoxin"/>
    <property type="match status" value="1"/>
</dbReference>
<dbReference type="PRINTS" id="PR00421">
    <property type="entry name" value="THIOREDOXIN"/>
</dbReference>
<dbReference type="SUPFAM" id="SSF52833">
    <property type="entry name" value="Thioredoxin-like"/>
    <property type="match status" value="1"/>
</dbReference>
<dbReference type="PROSITE" id="PS00194">
    <property type="entry name" value="THIOREDOXIN_1"/>
    <property type="match status" value="1"/>
</dbReference>
<dbReference type="PROSITE" id="PS51352">
    <property type="entry name" value="THIOREDOXIN_2"/>
    <property type="match status" value="1"/>
</dbReference>
<proteinExistence type="inferred from homology"/>
<geneLocation type="chloroplast"/>